<feature type="chain" id="PRO_0000391372" description="ELAV-like protein 2">
    <location>
        <begin position="1"/>
        <end position="375"/>
    </location>
</feature>
<feature type="domain" description="RRM 1" evidence="4">
    <location>
        <begin position="67"/>
        <end position="145"/>
    </location>
</feature>
<feature type="domain" description="RRM 2" evidence="4">
    <location>
        <begin position="153"/>
        <end position="233"/>
    </location>
</feature>
<feature type="domain" description="RRM 3" evidence="4">
    <location>
        <begin position="292"/>
        <end position="370"/>
    </location>
</feature>
<feature type="splice variant" id="VSP_038718" description="In isoform 2." evidence="5">
    <location>
        <position position="265"/>
    </location>
</feature>
<gene>
    <name evidence="8" type="primary">elavl2</name>
    <name evidence="2" type="synonym">elrB</name>
    <name type="ORF">TEgg126j06.1</name>
</gene>
<keyword id="KW-0025">Alternative splicing</keyword>
<keyword id="KW-0963">Cytoplasm</keyword>
<keyword id="KW-0217">Developmental protein</keyword>
<keyword id="KW-1185">Reference proteome</keyword>
<keyword id="KW-0677">Repeat</keyword>
<keyword id="KW-0687">Ribonucleoprotein</keyword>
<keyword id="KW-0694">RNA-binding</keyword>
<evidence type="ECO:0000250" key="1"/>
<evidence type="ECO:0000250" key="2">
    <source>
        <dbReference type="UniProtKB" id="Q91903"/>
    </source>
</evidence>
<evidence type="ECO:0000255" key="3"/>
<evidence type="ECO:0000255" key="4">
    <source>
        <dbReference type="PROSITE-ProRule" id="PRU00176"/>
    </source>
</evidence>
<evidence type="ECO:0000303" key="5">
    <source ref="1"/>
</evidence>
<evidence type="ECO:0000305" key="6"/>
<evidence type="ECO:0000312" key="7">
    <source>
        <dbReference type="EMBL" id="AAI27339.1"/>
    </source>
</evidence>
<evidence type="ECO:0000312" key="8">
    <source>
        <dbReference type="EMBL" id="CAJ82281.1"/>
    </source>
</evidence>
<dbReference type="EMBL" id="CR761432">
    <property type="protein sequence ID" value="CAJ82281.1"/>
    <property type="molecule type" value="mRNA"/>
</dbReference>
<dbReference type="EMBL" id="BC127338">
    <property type="protein sequence ID" value="AAI27339.1"/>
    <property type="status" value="ALT_INIT"/>
    <property type="molecule type" value="mRNA"/>
</dbReference>
<dbReference type="RefSeq" id="NP_001025498.3">
    <molecule id="Q28GD4-1"/>
    <property type="nucleotide sequence ID" value="NM_001030327.4"/>
</dbReference>
<dbReference type="RefSeq" id="XP_012819058.1">
    <property type="nucleotide sequence ID" value="XM_012963604.2"/>
</dbReference>
<dbReference type="SMR" id="Q28GD4"/>
<dbReference type="FunCoup" id="Q28GD4">
    <property type="interactions" value="1077"/>
</dbReference>
<dbReference type="STRING" id="8364.ENSXETP00000000368"/>
<dbReference type="PaxDb" id="8364-ENSXETP00000020681"/>
<dbReference type="DNASU" id="594913"/>
<dbReference type="GeneID" id="594913"/>
<dbReference type="KEGG" id="xtr:594913"/>
<dbReference type="AGR" id="Xenbase:XB-GENE-491749"/>
<dbReference type="CTD" id="1993"/>
<dbReference type="Xenbase" id="XB-GENE-491749">
    <property type="gene designation" value="elavl2"/>
</dbReference>
<dbReference type="eggNOG" id="KOG0145">
    <property type="taxonomic scope" value="Eukaryota"/>
</dbReference>
<dbReference type="InParanoid" id="Q28GD4"/>
<dbReference type="OrthoDB" id="266020at2759"/>
<dbReference type="Proteomes" id="UP000008143">
    <property type="component" value="Chromosome 1"/>
</dbReference>
<dbReference type="Bgee" id="ENSXETG00000038617">
    <property type="expression patterns" value="Expressed in brain and 8 other cell types or tissues"/>
</dbReference>
<dbReference type="GO" id="GO:0005938">
    <property type="term" value="C:cell cortex"/>
    <property type="evidence" value="ECO:0007669"/>
    <property type="project" value="UniProtKB-SubCell"/>
</dbReference>
<dbReference type="GO" id="GO:1990904">
    <property type="term" value="C:ribonucleoprotein complex"/>
    <property type="evidence" value="ECO:0007669"/>
    <property type="project" value="UniProtKB-KW"/>
</dbReference>
<dbReference type="GO" id="GO:0003723">
    <property type="term" value="F:RNA binding"/>
    <property type="evidence" value="ECO:0007669"/>
    <property type="project" value="UniProtKB-KW"/>
</dbReference>
<dbReference type="CDD" id="cd12771">
    <property type="entry name" value="RRM1_HuB"/>
    <property type="match status" value="1"/>
</dbReference>
<dbReference type="CDD" id="cd12775">
    <property type="entry name" value="RRM2_HuB"/>
    <property type="match status" value="1"/>
</dbReference>
<dbReference type="CDD" id="cd12654">
    <property type="entry name" value="RRM3_HuB"/>
    <property type="match status" value="1"/>
</dbReference>
<dbReference type="FunFam" id="3.30.70.330:FF:000006">
    <property type="entry name" value="ELAV-like 3"/>
    <property type="match status" value="1"/>
</dbReference>
<dbReference type="FunFam" id="3.30.70.330:FF:000005">
    <property type="entry name" value="ELAV-like protein"/>
    <property type="match status" value="1"/>
</dbReference>
<dbReference type="FunFam" id="3.30.70.330:FF:000017">
    <property type="entry name" value="ELAV-like protein"/>
    <property type="match status" value="1"/>
</dbReference>
<dbReference type="Gene3D" id="3.30.70.330">
    <property type="match status" value="3"/>
</dbReference>
<dbReference type="InterPro" id="IPR006548">
    <property type="entry name" value="ELAD_HU_SF"/>
</dbReference>
<dbReference type="InterPro" id="IPR034999">
    <property type="entry name" value="HuB_RRM2"/>
</dbReference>
<dbReference type="InterPro" id="IPR034914">
    <property type="entry name" value="HuB_RRM3"/>
</dbReference>
<dbReference type="InterPro" id="IPR002343">
    <property type="entry name" value="Hud_Sxl_RNA"/>
</dbReference>
<dbReference type="InterPro" id="IPR012677">
    <property type="entry name" value="Nucleotide-bd_a/b_plait_sf"/>
</dbReference>
<dbReference type="InterPro" id="IPR035979">
    <property type="entry name" value="RBD_domain_sf"/>
</dbReference>
<dbReference type="InterPro" id="IPR000504">
    <property type="entry name" value="RRM_dom"/>
</dbReference>
<dbReference type="NCBIfam" id="TIGR01661">
    <property type="entry name" value="ELAV_HUD_SF"/>
    <property type="match status" value="1"/>
</dbReference>
<dbReference type="PANTHER" id="PTHR10352">
    <property type="entry name" value="EUKARYOTIC TRANSLATION INITIATION FACTOR 3 SUBUNIT G"/>
    <property type="match status" value="1"/>
</dbReference>
<dbReference type="Pfam" id="PF00076">
    <property type="entry name" value="RRM_1"/>
    <property type="match status" value="3"/>
</dbReference>
<dbReference type="PRINTS" id="PR00961">
    <property type="entry name" value="HUDSXLRNA"/>
</dbReference>
<dbReference type="SMART" id="SM00360">
    <property type="entry name" value="RRM"/>
    <property type="match status" value="3"/>
</dbReference>
<dbReference type="SUPFAM" id="SSF54928">
    <property type="entry name" value="RNA-binding domain, RBD"/>
    <property type="match status" value="2"/>
</dbReference>
<dbReference type="PROSITE" id="PS50102">
    <property type="entry name" value="RRM"/>
    <property type="match status" value="3"/>
</dbReference>
<organism>
    <name type="scientific">Xenopus tropicalis</name>
    <name type="common">Western clawed frog</name>
    <name type="synonym">Silurana tropicalis</name>
    <dbReference type="NCBI Taxonomy" id="8364"/>
    <lineage>
        <taxon>Eukaryota</taxon>
        <taxon>Metazoa</taxon>
        <taxon>Chordata</taxon>
        <taxon>Craniata</taxon>
        <taxon>Vertebrata</taxon>
        <taxon>Euteleostomi</taxon>
        <taxon>Amphibia</taxon>
        <taxon>Batrachia</taxon>
        <taxon>Anura</taxon>
        <taxon>Pipoidea</taxon>
        <taxon>Pipidae</taxon>
        <taxon>Xenopodinae</taxon>
        <taxon>Xenopus</taxon>
        <taxon>Silurana</taxon>
    </lineage>
</organism>
<reference evidence="6 8" key="1">
    <citation type="submission" date="2006-10" db="EMBL/GenBank/DDBJ databases">
        <authorList>
            <consortium name="Sanger Xenopus tropicalis EST/cDNA project"/>
        </authorList>
    </citation>
    <scope>NUCLEOTIDE SEQUENCE [LARGE SCALE MRNA] (ISOFORM 2)</scope>
    <source>
        <tissue evidence="8">Egg</tissue>
    </source>
</reference>
<reference evidence="6 8" key="2">
    <citation type="submission" date="2006-11" db="EMBL/GenBank/DDBJ databases">
        <authorList>
            <consortium name="NIH - Xenopus Gene Collection (XGC) project"/>
        </authorList>
    </citation>
    <scope>NUCLEOTIDE SEQUENCE [LARGE SCALE MRNA] (ISOFORM 1)</scope>
    <source>
        <strain evidence="7">N6</strain>
        <tissue evidence="7">Oviduct</tissue>
    </source>
</reference>
<name>ELAV2_XENTR</name>
<comment type="function">
    <text evidence="1">Binds to poly-U elements and AU-rich elements (AREs) in the 3'-UTR of target mRNAs. Required for the vegetal localization of vg1 mRNA. Probably required for nervous system development (By similarity).</text>
</comment>
<comment type="subunit">
    <text evidence="1">Part of a ribonucleoprotein (RNP) complex, at least composed of elavl1/elrA and/or elavl2/elrB, igf2bp3/vg1RBP, ddx6/Xp54, ybx2/frgy2, lsm14b/rap55b and, in a subset of RNP complexes, stau1/staufen. Binds RNA as a homooligomer (By similarity).</text>
</comment>
<comment type="subcellular location">
    <subcellularLocation>
        <location evidence="2">Cytoplasm</location>
    </subcellularLocation>
    <subcellularLocation>
        <location evidence="2">Cytoplasm</location>
        <location evidence="2">Cell cortex</location>
    </subcellularLocation>
    <text evidence="2">Enriched at the vegetal cortex in stage III and IV oocytes.</text>
</comment>
<comment type="alternative products">
    <event type="alternative splicing"/>
    <isoform>
        <id>Q28GD4-1</id>
        <name>1</name>
        <sequence type="displayed"/>
    </isoform>
    <isoform>
        <id>Q28GD4-2</id>
        <name>2</name>
        <sequence type="described" ref="VSP_038718"/>
    </isoform>
</comment>
<comment type="similarity">
    <text evidence="3">Belongs to the RRM elav family.</text>
</comment>
<comment type="sequence caution" evidence="6">
    <conflict type="erroneous initiation">
        <sequence resource="EMBL-CDS" id="AAI27339"/>
    </conflict>
</comment>
<accession>Q28GD4</accession>
<accession>A0JPB3</accession>
<protein>
    <recommendedName>
        <fullName>ELAV-like protein 2</fullName>
    </recommendedName>
    <alternativeName>
        <fullName evidence="2">Protein ElrB</fullName>
    </alternativeName>
</protein>
<sequence length="375" mass="41137">MAVRLCDVASLLRSGSWAAEPWTGQVIAAMETQLSNGPTCNNTANCPNTINNCSSPVESSNTEDSKTNLIVNYLPQNMTQEELKSLFGSIGEIESCKLVRDKITGQSLGYGFVNYIDPKDAEKAINTLNGLRLQTKTIKVSYARPSSASIRDANLYVSGLPKTMTQKELEQLFSQYGRIITSRILVDQVTGVSRGVGFIRFDKRIEAEEAIKGLNGQKPPGATEPITVKFANNPSQKVNHTILSQLYQSPNRRYPGPLAQQAQRFSRFSPMTIDGMTSLAGINFPGHAGTGWCIFVYNLAPDADESILWQMFGPFGAVTNVKVIRDFNTNKCKGFGFVTMTNYDEAAMAIASLNGYRLGDRVLQVSFKTSKTHKA</sequence>
<proteinExistence type="evidence at transcript level"/>